<name>ENO_GEOMG</name>
<evidence type="ECO:0000255" key="1">
    <source>
        <dbReference type="HAMAP-Rule" id="MF_00318"/>
    </source>
</evidence>
<sequence length="429" mass="46543">MSEITDVYAREILDSRGNPTLEVEVFLESGVMGRAAVPSGASTGEREALELRDGDKSRYLGKGVLKAVDNVNNIIAEQIIGMEATDQIGIDQRMLDLDGTEYKSNLGANAILGVSLAVAKAAAEEVGLPLYQYIGGSNAKELPLPMMNILNGGAHADNNVDIQEFMIMPAGAKSFAEALRMGAEIFHALKGVLKGKGYNTAVGDEGGFAPNLKSNEEALEVIMDAIQKAGYKPGEEVLLALDVASSELFNDGVYTLENEAEPKKTPAQMVDFYENLVNKYPIVSIEDGMAENDWDGWKLLTDRLGKRIQIVGDDLFVTNPRILKEGIQKGIANSILIKLNQIGSLTETLDAIEMAKRAGYTCVISHRSGETEDTTLADLSVAVNAGQIKTGSLCRTDRVAKYNQLLRIEDELDTTALFRGKDVFYNIRK</sequence>
<protein>
    <recommendedName>
        <fullName evidence="1">Enolase</fullName>
        <ecNumber evidence="1">4.2.1.11</ecNumber>
    </recommendedName>
    <alternativeName>
        <fullName evidence="1">2-phospho-D-glycerate hydro-lyase</fullName>
    </alternativeName>
    <alternativeName>
        <fullName evidence="1">2-phosphoglycerate dehydratase</fullName>
    </alternativeName>
</protein>
<organism>
    <name type="scientific">Geobacter metallireducens (strain ATCC 53774 / DSM 7210 / GS-15)</name>
    <dbReference type="NCBI Taxonomy" id="269799"/>
    <lineage>
        <taxon>Bacteria</taxon>
        <taxon>Pseudomonadati</taxon>
        <taxon>Thermodesulfobacteriota</taxon>
        <taxon>Desulfuromonadia</taxon>
        <taxon>Geobacterales</taxon>
        <taxon>Geobacteraceae</taxon>
        <taxon>Geobacter</taxon>
    </lineage>
</organism>
<keyword id="KW-0963">Cytoplasm</keyword>
<keyword id="KW-0324">Glycolysis</keyword>
<keyword id="KW-0456">Lyase</keyword>
<keyword id="KW-0460">Magnesium</keyword>
<keyword id="KW-0479">Metal-binding</keyword>
<keyword id="KW-1185">Reference proteome</keyword>
<keyword id="KW-0964">Secreted</keyword>
<proteinExistence type="inferred from homology"/>
<feature type="chain" id="PRO_0000267039" description="Enolase">
    <location>
        <begin position="1"/>
        <end position="429"/>
    </location>
</feature>
<feature type="active site" description="Proton donor" evidence="1">
    <location>
        <position position="205"/>
    </location>
</feature>
<feature type="active site" description="Proton acceptor" evidence="1">
    <location>
        <position position="338"/>
    </location>
</feature>
<feature type="binding site" evidence="1">
    <location>
        <position position="163"/>
    </location>
    <ligand>
        <name>(2R)-2-phosphoglycerate</name>
        <dbReference type="ChEBI" id="CHEBI:58289"/>
    </ligand>
</feature>
<feature type="binding site" evidence="1">
    <location>
        <position position="242"/>
    </location>
    <ligand>
        <name>Mg(2+)</name>
        <dbReference type="ChEBI" id="CHEBI:18420"/>
    </ligand>
</feature>
<feature type="binding site" evidence="1">
    <location>
        <position position="286"/>
    </location>
    <ligand>
        <name>Mg(2+)</name>
        <dbReference type="ChEBI" id="CHEBI:18420"/>
    </ligand>
</feature>
<feature type="binding site" evidence="1">
    <location>
        <position position="313"/>
    </location>
    <ligand>
        <name>Mg(2+)</name>
        <dbReference type="ChEBI" id="CHEBI:18420"/>
    </ligand>
</feature>
<feature type="binding site" evidence="1">
    <location>
        <position position="338"/>
    </location>
    <ligand>
        <name>(2R)-2-phosphoglycerate</name>
        <dbReference type="ChEBI" id="CHEBI:58289"/>
    </ligand>
</feature>
<feature type="binding site" evidence="1">
    <location>
        <position position="367"/>
    </location>
    <ligand>
        <name>(2R)-2-phosphoglycerate</name>
        <dbReference type="ChEBI" id="CHEBI:58289"/>
    </ligand>
</feature>
<feature type="binding site" evidence="1">
    <location>
        <position position="368"/>
    </location>
    <ligand>
        <name>(2R)-2-phosphoglycerate</name>
        <dbReference type="ChEBI" id="CHEBI:58289"/>
    </ligand>
</feature>
<feature type="binding site" evidence="1">
    <location>
        <position position="389"/>
    </location>
    <ligand>
        <name>(2R)-2-phosphoglycerate</name>
        <dbReference type="ChEBI" id="CHEBI:58289"/>
    </ligand>
</feature>
<accession>Q39T27</accession>
<comment type="function">
    <text evidence="1">Catalyzes the reversible conversion of 2-phosphoglycerate (2-PG) into phosphoenolpyruvate (PEP). It is essential for the degradation of carbohydrates via glycolysis.</text>
</comment>
<comment type="catalytic activity">
    <reaction evidence="1">
        <text>(2R)-2-phosphoglycerate = phosphoenolpyruvate + H2O</text>
        <dbReference type="Rhea" id="RHEA:10164"/>
        <dbReference type="ChEBI" id="CHEBI:15377"/>
        <dbReference type="ChEBI" id="CHEBI:58289"/>
        <dbReference type="ChEBI" id="CHEBI:58702"/>
        <dbReference type="EC" id="4.2.1.11"/>
    </reaction>
</comment>
<comment type="cofactor">
    <cofactor evidence="1">
        <name>Mg(2+)</name>
        <dbReference type="ChEBI" id="CHEBI:18420"/>
    </cofactor>
    <text evidence="1">Binds a second Mg(2+) ion via substrate during catalysis.</text>
</comment>
<comment type="pathway">
    <text evidence="1">Carbohydrate degradation; glycolysis; pyruvate from D-glyceraldehyde 3-phosphate: step 4/5.</text>
</comment>
<comment type="subcellular location">
    <subcellularLocation>
        <location evidence="1">Cytoplasm</location>
    </subcellularLocation>
    <subcellularLocation>
        <location evidence="1">Secreted</location>
    </subcellularLocation>
    <subcellularLocation>
        <location evidence="1">Cell surface</location>
    </subcellularLocation>
    <text evidence="1">Fractions of enolase are present in both the cytoplasm and on the cell surface.</text>
</comment>
<comment type="similarity">
    <text evidence="1">Belongs to the enolase family.</text>
</comment>
<gene>
    <name evidence="1" type="primary">eno</name>
    <name type="ordered locus">Gmet_2372</name>
</gene>
<reference key="1">
    <citation type="journal article" date="2009" name="BMC Microbiol.">
        <title>The genome sequence of Geobacter metallireducens: features of metabolism, physiology and regulation common and dissimilar to Geobacter sulfurreducens.</title>
        <authorList>
            <person name="Aklujkar M."/>
            <person name="Krushkal J."/>
            <person name="DiBartolo G."/>
            <person name="Lapidus A."/>
            <person name="Land M.L."/>
            <person name="Lovley D.R."/>
        </authorList>
    </citation>
    <scope>NUCLEOTIDE SEQUENCE [LARGE SCALE GENOMIC DNA]</scope>
    <source>
        <strain>ATCC 53774 / DSM 7210 / GS-15</strain>
    </source>
</reference>
<dbReference type="EC" id="4.2.1.11" evidence="1"/>
<dbReference type="EMBL" id="CP000148">
    <property type="protein sequence ID" value="ABB32597.1"/>
    <property type="molecule type" value="Genomic_DNA"/>
</dbReference>
<dbReference type="RefSeq" id="WP_004513248.1">
    <property type="nucleotide sequence ID" value="NC_007517.1"/>
</dbReference>
<dbReference type="SMR" id="Q39T27"/>
<dbReference type="STRING" id="269799.Gmet_2372"/>
<dbReference type="KEGG" id="gme:Gmet_2372"/>
<dbReference type="eggNOG" id="COG0148">
    <property type="taxonomic scope" value="Bacteria"/>
</dbReference>
<dbReference type="HOGENOM" id="CLU_031223_2_1_7"/>
<dbReference type="UniPathway" id="UPA00109">
    <property type="reaction ID" value="UER00187"/>
</dbReference>
<dbReference type="Proteomes" id="UP000007073">
    <property type="component" value="Chromosome"/>
</dbReference>
<dbReference type="GO" id="GO:0009986">
    <property type="term" value="C:cell surface"/>
    <property type="evidence" value="ECO:0007669"/>
    <property type="project" value="UniProtKB-SubCell"/>
</dbReference>
<dbReference type="GO" id="GO:0005576">
    <property type="term" value="C:extracellular region"/>
    <property type="evidence" value="ECO:0007669"/>
    <property type="project" value="UniProtKB-SubCell"/>
</dbReference>
<dbReference type="GO" id="GO:0000015">
    <property type="term" value="C:phosphopyruvate hydratase complex"/>
    <property type="evidence" value="ECO:0007669"/>
    <property type="project" value="InterPro"/>
</dbReference>
<dbReference type="GO" id="GO:0000287">
    <property type="term" value="F:magnesium ion binding"/>
    <property type="evidence" value="ECO:0007669"/>
    <property type="project" value="UniProtKB-UniRule"/>
</dbReference>
<dbReference type="GO" id="GO:0004634">
    <property type="term" value="F:phosphopyruvate hydratase activity"/>
    <property type="evidence" value="ECO:0007669"/>
    <property type="project" value="UniProtKB-UniRule"/>
</dbReference>
<dbReference type="GO" id="GO:0006096">
    <property type="term" value="P:glycolytic process"/>
    <property type="evidence" value="ECO:0007669"/>
    <property type="project" value="UniProtKB-UniRule"/>
</dbReference>
<dbReference type="CDD" id="cd03313">
    <property type="entry name" value="enolase"/>
    <property type="match status" value="1"/>
</dbReference>
<dbReference type="FunFam" id="3.20.20.120:FF:000001">
    <property type="entry name" value="Enolase"/>
    <property type="match status" value="1"/>
</dbReference>
<dbReference type="FunFam" id="3.30.390.10:FF:000001">
    <property type="entry name" value="Enolase"/>
    <property type="match status" value="1"/>
</dbReference>
<dbReference type="Gene3D" id="3.20.20.120">
    <property type="entry name" value="Enolase-like C-terminal domain"/>
    <property type="match status" value="1"/>
</dbReference>
<dbReference type="Gene3D" id="3.30.390.10">
    <property type="entry name" value="Enolase-like, N-terminal domain"/>
    <property type="match status" value="1"/>
</dbReference>
<dbReference type="HAMAP" id="MF_00318">
    <property type="entry name" value="Enolase"/>
    <property type="match status" value="1"/>
</dbReference>
<dbReference type="InterPro" id="IPR000941">
    <property type="entry name" value="Enolase"/>
</dbReference>
<dbReference type="InterPro" id="IPR036849">
    <property type="entry name" value="Enolase-like_C_sf"/>
</dbReference>
<dbReference type="InterPro" id="IPR029017">
    <property type="entry name" value="Enolase-like_N"/>
</dbReference>
<dbReference type="InterPro" id="IPR020810">
    <property type="entry name" value="Enolase_C"/>
</dbReference>
<dbReference type="InterPro" id="IPR020809">
    <property type="entry name" value="Enolase_CS"/>
</dbReference>
<dbReference type="InterPro" id="IPR020811">
    <property type="entry name" value="Enolase_N"/>
</dbReference>
<dbReference type="NCBIfam" id="TIGR01060">
    <property type="entry name" value="eno"/>
    <property type="match status" value="1"/>
</dbReference>
<dbReference type="PANTHER" id="PTHR11902">
    <property type="entry name" value="ENOLASE"/>
    <property type="match status" value="1"/>
</dbReference>
<dbReference type="PANTHER" id="PTHR11902:SF1">
    <property type="entry name" value="ENOLASE"/>
    <property type="match status" value="1"/>
</dbReference>
<dbReference type="Pfam" id="PF00113">
    <property type="entry name" value="Enolase_C"/>
    <property type="match status" value="1"/>
</dbReference>
<dbReference type="Pfam" id="PF03952">
    <property type="entry name" value="Enolase_N"/>
    <property type="match status" value="1"/>
</dbReference>
<dbReference type="PIRSF" id="PIRSF001400">
    <property type="entry name" value="Enolase"/>
    <property type="match status" value="1"/>
</dbReference>
<dbReference type="PRINTS" id="PR00148">
    <property type="entry name" value="ENOLASE"/>
</dbReference>
<dbReference type="SFLD" id="SFLDF00002">
    <property type="entry name" value="enolase"/>
    <property type="match status" value="1"/>
</dbReference>
<dbReference type="SFLD" id="SFLDG00178">
    <property type="entry name" value="enolase"/>
    <property type="match status" value="1"/>
</dbReference>
<dbReference type="SMART" id="SM01192">
    <property type="entry name" value="Enolase_C"/>
    <property type="match status" value="1"/>
</dbReference>
<dbReference type="SMART" id="SM01193">
    <property type="entry name" value="Enolase_N"/>
    <property type="match status" value="1"/>
</dbReference>
<dbReference type="SUPFAM" id="SSF51604">
    <property type="entry name" value="Enolase C-terminal domain-like"/>
    <property type="match status" value="1"/>
</dbReference>
<dbReference type="SUPFAM" id="SSF54826">
    <property type="entry name" value="Enolase N-terminal domain-like"/>
    <property type="match status" value="1"/>
</dbReference>
<dbReference type="PROSITE" id="PS00164">
    <property type="entry name" value="ENOLASE"/>
    <property type="match status" value="1"/>
</dbReference>